<gene>
    <name type="primary">RGS4</name>
</gene>
<feature type="chain" id="PRO_0000261131" description="Regulator of G-protein signaling 4">
    <location>
        <begin position="1"/>
        <end position="205"/>
    </location>
</feature>
<feature type="domain" description="RGS" evidence="2">
    <location>
        <begin position="62"/>
        <end position="178"/>
    </location>
</feature>
<feature type="lipid moiety-binding region" description="S-palmitoyl cysteine" evidence="1">
    <location>
        <position position="2"/>
    </location>
</feature>
<feature type="lipid moiety-binding region" description="S-palmitoyl cysteine" evidence="1">
    <location>
        <position position="12"/>
    </location>
</feature>
<feature type="lipid moiety-binding region" description="S-palmitoyl cysteine" evidence="1">
    <location>
        <position position="95"/>
    </location>
</feature>
<feature type="sequence conflict" description="In Ref. 1; CAH90892." evidence="3" ref="1">
    <original>E</original>
    <variation>G</variation>
    <location>
        <position position="87"/>
    </location>
</feature>
<proteinExistence type="evidence at transcript level"/>
<organism>
    <name type="scientific">Pongo abelii</name>
    <name type="common">Sumatran orangutan</name>
    <name type="synonym">Pongo pygmaeus abelii</name>
    <dbReference type="NCBI Taxonomy" id="9601"/>
    <lineage>
        <taxon>Eukaryota</taxon>
        <taxon>Metazoa</taxon>
        <taxon>Chordata</taxon>
        <taxon>Craniata</taxon>
        <taxon>Vertebrata</taxon>
        <taxon>Euteleostomi</taxon>
        <taxon>Mammalia</taxon>
        <taxon>Eutheria</taxon>
        <taxon>Euarchontoglires</taxon>
        <taxon>Primates</taxon>
        <taxon>Haplorrhini</taxon>
        <taxon>Catarrhini</taxon>
        <taxon>Hominidae</taxon>
        <taxon>Pongo</taxon>
    </lineage>
</organism>
<dbReference type="EMBL" id="CR858680">
    <property type="protein sequence ID" value="CAH90892.1"/>
    <property type="molecule type" value="mRNA"/>
</dbReference>
<dbReference type="EMBL" id="CR860271">
    <property type="protein sequence ID" value="CAH92413.1"/>
    <property type="molecule type" value="mRNA"/>
</dbReference>
<dbReference type="RefSeq" id="NP_001125509.1">
    <property type="nucleotide sequence ID" value="NM_001132037.1"/>
</dbReference>
<dbReference type="RefSeq" id="XP_063583610.1">
    <property type="nucleotide sequence ID" value="XM_063727540.1"/>
</dbReference>
<dbReference type="BMRB" id="Q5R747"/>
<dbReference type="SMR" id="Q5R747"/>
<dbReference type="FunCoup" id="Q5R747">
    <property type="interactions" value="1103"/>
</dbReference>
<dbReference type="STRING" id="9601.ENSPPYP00000000674"/>
<dbReference type="GeneID" id="100172418"/>
<dbReference type="KEGG" id="pon:100172418"/>
<dbReference type="CTD" id="5999"/>
<dbReference type="eggNOG" id="KOG3589">
    <property type="taxonomic scope" value="Eukaryota"/>
</dbReference>
<dbReference type="HOGENOM" id="CLU_059863_3_0_1"/>
<dbReference type="InParanoid" id="Q5R747"/>
<dbReference type="OrthoDB" id="196547at2759"/>
<dbReference type="Proteomes" id="UP000001595">
    <property type="component" value="Unplaced"/>
</dbReference>
<dbReference type="GO" id="GO:0003924">
    <property type="term" value="F:GTPase activity"/>
    <property type="evidence" value="ECO:0007669"/>
    <property type="project" value="UniProtKB-ARBA"/>
</dbReference>
<dbReference type="GO" id="GO:0009968">
    <property type="term" value="P:negative regulation of signal transduction"/>
    <property type="evidence" value="ECO:0007669"/>
    <property type="project" value="UniProtKB-KW"/>
</dbReference>
<dbReference type="CDD" id="cd08714">
    <property type="entry name" value="RGS_RGS4"/>
    <property type="match status" value="1"/>
</dbReference>
<dbReference type="FunFam" id="1.10.167.10:FF:000001">
    <property type="entry name" value="Putative regulator of g-protein signaling 12"/>
    <property type="match status" value="1"/>
</dbReference>
<dbReference type="FunFam" id="1.10.196.10:FF:000001">
    <property type="entry name" value="Regulator of G-protein signaling 8"/>
    <property type="match status" value="1"/>
</dbReference>
<dbReference type="Gene3D" id="1.10.196.10">
    <property type="match status" value="1"/>
</dbReference>
<dbReference type="Gene3D" id="1.10.167.10">
    <property type="entry name" value="Regulator of G-protein Signalling 4, domain 2"/>
    <property type="match status" value="1"/>
</dbReference>
<dbReference type="InterPro" id="IPR016137">
    <property type="entry name" value="RGS"/>
</dbReference>
<dbReference type="InterPro" id="IPR034953">
    <property type="entry name" value="RGS_RGS4"/>
</dbReference>
<dbReference type="InterPro" id="IPR036305">
    <property type="entry name" value="RGS_sf"/>
</dbReference>
<dbReference type="InterPro" id="IPR024066">
    <property type="entry name" value="RGS_subdom1/3"/>
</dbReference>
<dbReference type="InterPro" id="IPR044926">
    <property type="entry name" value="RGS_subdomain_2"/>
</dbReference>
<dbReference type="PANTHER" id="PTHR10845">
    <property type="entry name" value="REGULATOR OF G PROTEIN SIGNALING"/>
    <property type="match status" value="1"/>
</dbReference>
<dbReference type="PANTHER" id="PTHR10845:SF184">
    <property type="entry name" value="REGULATOR OF G-PROTEIN SIGNALING 4"/>
    <property type="match status" value="1"/>
</dbReference>
<dbReference type="Pfam" id="PF00615">
    <property type="entry name" value="RGS"/>
    <property type="match status" value="1"/>
</dbReference>
<dbReference type="PRINTS" id="PR01301">
    <property type="entry name" value="RGSPROTEIN"/>
</dbReference>
<dbReference type="SMART" id="SM00315">
    <property type="entry name" value="RGS"/>
    <property type="match status" value="1"/>
</dbReference>
<dbReference type="SUPFAM" id="SSF48097">
    <property type="entry name" value="Regulator of G-protein signaling, RGS"/>
    <property type="match status" value="1"/>
</dbReference>
<dbReference type="PROSITE" id="PS50132">
    <property type="entry name" value="RGS"/>
    <property type="match status" value="1"/>
</dbReference>
<evidence type="ECO:0000250" key="1"/>
<evidence type="ECO:0000255" key="2">
    <source>
        <dbReference type="PROSITE-ProRule" id="PRU00171"/>
    </source>
</evidence>
<evidence type="ECO:0000305" key="3"/>
<sequence>MCKGLAGLPASCLRSAKDMKHRLGFLLQKSDSCEHNSSHNKKDKVIICQRVSQEEVKKWAESLENLISHECGLAAFKAFLKSEYSEENIDFWISCEEYKKIKSPSKLSPKAKKIYNEFISVQASKEVNLDSCTREETSRNMLEPTITCFDEAQKKIFNLMEKDSYRRFLKSRFYLDLVNPSSCGAEKQKGAKSSADCASLVPQCA</sequence>
<protein>
    <recommendedName>
        <fullName>Regulator of G-protein signaling 4</fullName>
        <shortName>RGS4</shortName>
    </recommendedName>
</protein>
<name>RGS4_PONAB</name>
<accession>Q5R747</accession>
<accession>Q5RBG8</accession>
<reference key="1">
    <citation type="submission" date="2004-11" db="EMBL/GenBank/DDBJ databases">
        <authorList>
            <consortium name="The German cDNA consortium"/>
        </authorList>
    </citation>
    <scope>NUCLEOTIDE SEQUENCE [LARGE SCALE MRNA]</scope>
    <source>
        <tissue>Brain cortex</tissue>
    </source>
</reference>
<comment type="function">
    <text evidence="1">Inhibits signal transduction by increasing the GTPase activity of G protein alpha subunits thereby driving them into their inactive GDP-bound form. Activity on G(z)-alpha is inhibited by phosphorylation of the G-protein. Activity on G(z)-alpha and G(i)-alpha-1 is inhibited by palmitoylation of the G-protein (By similarity).</text>
</comment>
<comment type="PTM">
    <text evidence="1">Palmitoylated on Cys-2 and/or Cys-12.</text>
</comment>
<comment type="PTM">
    <text evidence="1">Phosphorylated by cyclic GMP-dependent protein kinase.</text>
</comment>
<keyword id="KW-0449">Lipoprotein</keyword>
<keyword id="KW-0564">Palmitate</keyword>
<keyword id="KW-0597">Phosphoprotein</keyword>
<keyword id="KW-1185">Reference proteome</keyword>
<keyword id="KW-0734">Signal transduction inhibitor</keyword>